<protein>
    <recommendedName>
        <fullName>Protamine-like protein</fullName>
    </recommendedName>
</protein>
<gene>
    <name type="primary">tpr</name>
    <name type="ordered locus">b1229</name>
    <name type="ordered locus">JW1219</name>
</gene>
<keyword id="KW-1185">Reference proteome</keyword>
<feature type="chain" id="PRO_0000097053" description="Protamine-like protein">
    <location>
        <begin position="1"/>
        <end position="29"/>
    </location>
</feature>
<feature type="region of interest" description="Disordered" evidence="1">
    <location>
        <begin position="1"/>
        <end position="29"/>
    </location>
</feature>
<feature type="compositionally biased region" description="Basic and acidic residues" evidence="1">
    <location>
        <begin position="12"/>
        <end position="29"/>
    </location>
</feature>
<reference key="1">
    <citation type="journal article" date="1981" name="Cell">
        <title>The tyrT locus: termination and processing of a complex transcript.</title>
        <authorList>
            <person name="Rossi J."/>
            <person name="Egan J."/>
            <person name="Hudson L."/>
            <person name="Landy A."/>
        </authorList>
    </citation>
    <scope>NUCLEOTIDE SEQUENCE [GENOMIC DNA]</scope>
</reference>
<reference key="2">
    <citation type="journal article" date="1981" name="Cell">
        <title>An E. coli gene coding for a protamine-like protein.</title>
        <authorList>
            <person name="Altman S."/>
            <person name="Model P."/>
            <person name="Dixon G.H."/>
            <person name="Wosnick M.A."/>
        </authorList>
    </citation>
    <scope>NUCLEOTIDE SEQUENCE [GENOMIC DNA]</scope>
</reference>
<reference key="3">
    <citation type="journal article" date="1996" name="DNA Res.">
        <title>A 718-kb DNA sequence of the Escherichia coli K-12 genome corresponding to the 12.7-28.0 min region on the linkage map.</title>
        <authorList>
            <person name="Oshima T."/>
            <person name="Aiba H."/>
            <person name="Baba T."/>
            <person name="Fujita K."/>
            <person name="Hayashi K."/>
            <person name="Honjo A."/>
            <person name="Ikemoto K."/>
            <person name="Inada T."/>
            <person name="Itoh T."/>
            <person name="Kajihara M."/>
            <person name="Kanai K."/>
            <person name="Kashimoto K."/>
            <person name="Kimura S."/>
            <person name="Kitagawa M."/>
            <person name="Makino K."/>
            <person name="Masuda S."/>
            <person name="Miki T."/>
            <person name="Mizobuchi K."/>
            <person name="Mori H."/>
            <person name="Motomura K."/>
            <person name="Nakamura Y."/>
            <person name="Nashimoto H."/>
            <person name="Nishio Y."/>
            <person name="Saito N."/>
            <person name="Sampei G."/>
            <person name="Seki Y."/>
            <person name="Tagami H."/>
            <person name="Takemoto K."/>
            <person name="Wada C."/>
            <person name="Yamamoto Y."/>
            <person name="Yano M."/>
            <person name="Horiuchi T."/>
        </authorList>
    </citation>
    <scope>NUCLEOTIDE SEQUENCE [LARGE SCALE GENOMIC DNA]</scope>
    <source>
        <strain>K12 / W3110 / ATCC 27325 / DSM 5911</strain>
    </source>
</reference>
<reference key="4">
    <citation type="journal article" date="1997" name="Science">
        <title>The complete genome sequence of Escherichia coli K-12.</title>
        <authorList>
            <person name="Blattner F.R."/>
            <person name="Plunkett G. III"/>
            <person name="Bloch C.A."/>
            <person name="Perna N.T."/>
            <person name="Burland V."/>
            <person name="Riley M."/>
            <person name="Collado-Vides J."/>
            <person name="Glasner J.D."/>
            <person name="Rode C.K."/>
            <person name="Mayhew G.F."/>
            <person name="Gregor J."/>
            <person name="Davis N.W."/>
            <person name="Kirkpatrick H.A."/>
            <person name="Goeden M.A."/>
            <person name="Rose D.J."/>
            <person name="Mau B."/>
            <person name="Shao Y."/>
        </authorList>
    </citation>
    <scope>NUCLEOTIDE SEQUENCE [LARGE SCALE GENOMIC DNA]</scope>
    <source>
        <strain>K12 / MG1655 / ATCC 47076</strain>
    </source>
</reference>
<reference key="5">
    <citation type="journal article" date="2006" name="Mol. Syst. Biol.">
        <title>Highly accurate genome sequences of Escherichia coli K-12 strains MG1655 and W3110.</title>
        <authorList>
            <person name="Hayashi K."/>
            <person name="Morooka N."/>
            <person name="Yamamoto Y."/>
            <person name="Fujita K."/>
            <person name="Isono K."/>
            <person name="Choi S."/>
            <person name="Ohtsubo E."/>
            <person name="Baba T."/>
            <person name="Wanner B.L."/>
            <person name="Mori H."/>
            <person name="Horiuchi T."/>
        </authorList>
    </citation>
    <scope>NUCLEOTIDE SEQUENCE [LARGE SCALE GENOMIC DNA]</scope>
    <source>
        <strain>K12 / W3110 / ATCC 27325 / DSM 5911</strain>
    </source>
</reference>
<evidence type="ECO:0000256" key="1">
    <source>
        <dbReference type="SAM" id="MobiDB-lite"/>
    </source>
</evidence>
<evidence type="ECO:0000305" key="2"/>
<organism>
    <name type="scientific">Escherichia coli (strain K12)</name>
    <dbReference type="NCBI Taxonomy" id="83333"/>
    <lineage>
        <taxon>Bacteria</taxon>
        <taxon>Pseudomonadati</taxon>
        <taxon>Pseudomonadota</taxon>
        <taxon>Gammaproteobacteria</taxon>
        <taxon>Enterobacterales</taxon>
        <taxon>Enterobacteriaceae</taxon>
        <taxon>Escherichia</taxon>
    </lineage>
</organism>
<sequence>MRSFDQGSTRAPARERCRRQRPEGRSAQR</sequence>
<name>PRTL_ECOLI</name>
<dbReference type="EMBL" id="K01197">
    <property type="protein sequence ID" value="AAA24670.1"/>
    <property type="status" value="ALT_INIT"/>
    <property type="molecule type" value="Genomic_DNA"/>
</dbReference>
<dbReference type="EMBL" id="U00096">
    <property type="protein sequence ID" value="AAC74313.2"/>
    <property type="molecule type" value="Genomic_DNA"/>
</dbReference>
<dbReference type="EMBL" id="AP009048">
    <property type="protein sequence ID" value="BAA36099.1"/>
    <property type="status" value="ALT_INIT"/>
    <property type="molecule type" value="Genomic_DNA"/>
</dbReference>
<dbReference type="PIR" id="A90813">
    <property type="entry name" value="WRECP1"/>
</dbReference>
<dbReference type="RefSeq" id="NP_415747.2">
    <property type="nucleotide sequence ID" value="NC_000913.3"/>
</dbReference>
<dbReference type="FunCoup" id="P02338">
    <property type="interactions" value="7"/>
</dbReference>
<dbReference type="STRING" id="511145.b1229"/>
<dbReference type="PaxDb" id="511145-b1229"/>
<dbReference type="EnsemblBacteria" id="AAC74313">
    <property type="protein sequence ID" value="AAC74313"/>
    <property type="gene ID" value="b1229"/>
</dbReference>
<dbReference type="GeneID" id="946224"/>
<dbReference type="KEGG" id="ecj:JW1219"/>
<dbReference type="KEGG" id="eco:b1229"/>
<dbReference type="EchoBASE" id="EB1009"/>
<dbReference type="HOGENOM" id="CLU_004137_7_4_6"/>
<dbReference type="InParanoid" id="P02338"/>
<dbReference type="BioCyc" id="EcoCyc:EG11016-MONOMER"/>
<dbReference type="PRO" id="PR:P02338"/>
<dbReference type="Proteomes" id="UP000000625">
    <property type="component" value="Chromosome"/>
</dbReference>
<proteinExistence type="predicted"/>
<accession>P02338</accession>
<comment type="sequence caution" evidence="2">
    <conflict type="erroneous initiation">
        <sequence resource="EMBL-CDS" id="AAA24670"/>
    </conflict>
</comment>
<comment type="sequence caution" evidence="2">
    <conflict type="erroneous initiation">
        <sequence resource="EMBL-CDS" id="BAA36099"/>
    </conflict>
</comment>